<accession>A7HNS8</accession>
<sequence>MYVEIIDVRAREVLDSRGNPTVEVEVLLEDGSFGSAIVPSGASTGKFEALELRDGDKKRYMGKGVLKAVEHVNEIIAPRVVGLNAFDQVYLDKVLLELDGTENKSKLGANAILGVSMAVARAASESAGVPLYKYLGGANAKILPVPFMNVINGGAHADNSLDIQEFMLVPAGAPSFKEALRYGAEVFHTLKKILKDAGHVTAVGDEGGFAPNLSSNEEAIQVLIEAIKKAGYEPGKDIYIALDCAASEFYNEETGKYNIDGTEKTGDELIEYYSMLIDKYWPVIISIEDPFEQEDWDSYVKFTQKVGGKVQIVGDDLYVTNVKRLEKGIELFASNSILIKLNQIGSVTETLDAIEMAKTAGMTNVISHRSGETEDTFIADLAVATNAGMIKTGSLSRSERIAKYNRLLRIEEELGDAAIYKGLGAFYSIKR</sequence>
<protein>
    <recommendedName>
        <fullName evidence="1">Enolase</fullName>
        <ecNumber evidence="1">4.2.1.11</ecNumber>
    </recommendedName>
    <alternativeName>
        <fullName evidence="1">2-phospho-D-glycerate hydro-lyase</fullName>
    </alternativeName>
    <alternativeName>
        <fullName evidence="1">2-phosphoglycerate dehydratase</fullName>
    </alternativeName>
</protein>
<evidence type="ECO:0000255" key="1">
    <source>
        <dbReference type="HAMAP-Rule" id="MF_00318"/>
    </source>
</evidence>
<name>ENO_FERNB</name>
<keyword id="KW-0963">Cytoplasm</keyword>
<keyword id="KW-0324">Glycolysis</keyword>
<keyword id="KW-0456">Lyase</keyword>
<keyword id="KW-0460">Magnesium</keyword>
<keyword id="KW-0479">Metal-binding</keyword>
<keyword id="KW-1185">Reference proteome</keyword>
<keyword id="KW-0964">Secreted</keyword>
<reference key="1">
    <citation type="submission" date="2007-07" db="EMBL/GenBank/DDBJ databases">
        <title>Complete sequence of Fervidobacterium nodosum Rt17-B1.</title>
        <authorList>
            <consortium name="US DOE Joint Genome Institute"/>
            <person name="Copeland A."/>
            <person name="Lucas S."/>
            <person name="Lapidus A."/>
            <person name="Barry K."/>
            <person name="Glavina del Rio T."/>
            <person name="Dalin E."/>
            <person name="Tice H."/>
            <person name="Pitluck S."/>
            <person name="Saunders E."/>
            <person name="Brettin T."/>
            <person name="Bruce D."/>
            <person name="Detter J.C."/>
            <person name="Han C."/>
            <person name="Schmutz J."/>
            <person name="Larimer F."/>
            <person name="Land M."/>
            <person name="Hauser L."/>
            <person name="Kyrpides N."/>
            <person name="Mikhailova N."/>
            <person name="Nelson K."/>
            <person name="Gogarten J.P."/>
            <person name="Noll K."/>
            <person name="Richardson P."/>
        </authorList>
    </citation>
    <scope>NUCLEOTIDE SEQUENCE [LARGE SCALE GENOMIC DNA]</scope>
    <source>
        <strain>ATCC 35602 / DSM 5306 / Rt17-B1</strain>
    </source>
</reference>
<gene>
    <name evidence="1" type="primary">eno</name>
    <name type="ordered locus">Fnod_1726</name>
</gene>
<feature type="chain" id="PRO_1000072007" description="Enolase">
    <location>
        <begin position="1"/>
        <end position="431"/>
    </location>
</feature>
<feature type="active site" description="Proton donor" evidence="1">
    <location>
        <position position="206"/>
    </location>
</feature>
<feature type="active site" description="Proton acceptor" evidence="1">
    <location>
        <position position="340"/>
    </location>
</feature>
<feature type="binding site" evidence="1">
    <location>
        <position position="164"/>
    </location>
    <ligand>
        <name>(2R)-2-phosphoglycerate</name>
        <dbReference type="ChEBI" id="CHEBI:58289"/>
    </ligand>
</feature>
<feature type="binding site" evidence="1">
    <location>
        <position position="243"/>
    </location>
    <ligand>
        <name>Mg(2+)</name>
        <dbReference type="ChEBI" id="CHEBI:18420"/>
    </ligand>
</feature>
<feature type="binding site" evidence="1">
    <location>
        <position position="288"/>
    </location>
    <ligand>
        <name>Mg(2+)</name>
        <dbReference type="ChEBI" id="CHEBI:18420"/>
    </ligand>
</feature>
<feature type="binding site" evidence="1">
    <location>
        <position position="315"/>
    </location>
    <ligand>
        <name>Mg(2+)</name>
        <dbReference type="ChEBI" id="CHEBI:18420"/>
    </ligand>
</feature>
<feature type="binding site" evidence="1">
    <location>
        <position position="340"/>
    </location>
    <ligand>
        <name>(2R)-2-phosphoglycerate</name>
        <dbReference type="ChEBI" id="CHEBI:58289"/>
    </ligand>
</feature>
<feature type="binding site" evidence="1">
    <location>
        <position position="369"/>
    </location>
    <ligand>
        <name>(2R)-2-phosphoglycerate</name>
        <dbReference type="ChEBI" id="CHEBI:58289"/>
    </ligand>
</feature>
<feature type="binding site" evidence="1">
    <location>
        <position position="370"/>
    </location>
    <ligand>
        <name>(2R)-2-phosphoglycerate</name>
        <dbReference type="ChEBI" id="CHEBI:58289"/>
    </ligand>
</feature>
<feature type="binding site" evidence="1">
    <location>
        <position position="391"/>
    </location>
    <ligand>
        <name>(2R)-2-phosphoglycerate</name>
        <dbReference type="ChEBI" id="CHEBI:58289"/>
    </ligand>
</feature>
<dbReference type="EC" id="4.2.1.11" evidence="1"/>
<dbReference type="EMBL" id="CP000771">
    <property type="protein sequence ID" value="ABS61561.1"/>
    <property type="molecule type" value="Genomic_DNA"/>
</dbReference>
<dbReference type="RefSeq" id="WP_011994852.1">
    <property type="nucleotide sequence ID" value="NC_009718.1"/>
</dbReference>
<dbReference type="SMR" id="A7HNS8"/>
<dbReference type="STRING" id="381764.Fnod_1726"/>
<dbReference type="KEGG" id="fno:Fnod_1726"/>
<dbReference type="eggNOG" id="COG0148">
    <property type="taxonomic scope" value="Bacteria"/>
</dbReference>
<dbReference type="HOGENOM" id="CLU_031223_2_1_0"/>
<dbReference type="OrthoDB" id="9804716at2"/>
<dbReference type="UniPathway" id="UPA00109">
    <property type="reaction ID" value="UER00187"/>
</dbReference>
<dbReference type="Proteomes" id="UP000002415">
    <property type="component" value="Chromosome"/>
</dbReference>
<dbReference type="GO" id="GO:0009986">
    <property type="term" value="C:cell surface"/>
    <property type="evidence" value="ECO:0007669"/>
    <property type="project" value="UniProtKB-SubCell"/>
</dbReference>
<dbReference type="GO" id="GO:0005576">
    <property type="term" value="C:extracellular region"/>
    <property type="evidence" value="ECO:0007669"/>
    <property type="project" value="UniProtKB-SubCell"/>
</dbReference>
<dbReference type="GO" id="GO:0000015">
    <property type="term" value="C:phosphopyruvate hydratase complex"/>
    <property type="evidence" value="ECO:0007669"/>
    <property type="project" value="InterPro"/>
</dbReference>
<dbReference type="GO" id="GO:0000287">
    <property type="term" value="F:magnesium ion binding"/>
    <property type="evidence" value="ECO:0007669"/>
    <property type="project" value="UniProtKB-UniRule"/>
</dbReference>
<dbReference type="GO" id="GO:0004634">
    <property type="term" value="F:phosphopyruvate hydratase activity"/>
    <property type="evidence" value="ECO:0007669"/>
    <property type="project" value="UniProtKB-UniRule"/>
</dbReference>
<dbReference type="GO" id="GO:0006096">
    <property type="term" value="P:glycolytic process"/>
    <property type="evidence" value="ECO:0007669"/>
    <property type="project" value="UniProtKB-UniRule"/>
</dbReference>
<dbReference type="CDD" id="cd03313">
    <property type="entry name" value="enolase"/>
    <property type="match status" value="1"/>
</dbReference>
<dbReference type="FunFam" id="3.20.20.120:FF:000001">
    <property type="entry name" value="Enolase"/>
    <property type="match status" value="1"/>
</dbReference>
<dbReference type="FunFam" id="3.30.390.10:FF:000001">
    <property type="entry name" value="Enolase"/>
    <property type="match status" value="1"/>
</dbReference>
<dbReference type="Gene3D" id="3.20.20.120">
    <property type="entry name" value="Enolase-like C-terminal domain"/>
    <property type="match status" value="1"/>
</dbReference>
<dbReference type="Gene3D" id="3.30.390.10">
    <property type="entry name" value="Enolase-like, N-terminal domain"/>
    <property type="match status" value="1"/>
</dbReference>
<dbReference type="HAMAP" id="MF_00318">
    <property type="entry name" value="Enolase"/>
    <property type="match status" value="1"/>
</dbReference>
<dbReference type="InterPro" id="IPR000941">
    <property type="entry name" value="Enolase"/>
</dbReference>
<dbReference type="InterPro" id="IPR036849">
    <property type="entry name" value="Enolase-like_C_sf"/>
</dbReference>
<dbReference type="InterPro" id="IPR029017">
    <property type="entry name" value="Enolase-like_N"/>
</dbReference>
<dbReference type="InterPro" id="IPR020810">
    <property type="entry name" value="Enolase_C"/>
</dbReference>
<dbReference type="InterPro" id="IPR020809">
    <property type="entry name" value="Enolase_CS"/>
</dbReference>
<dbReference type="InterPro" id="IPR020811">
    <property type="entry name" value="Enolase_N"/>
</dbReference>
<dbReference type="NCBIfam" id="TIGR01060">
    <property type="entry name" value="eno"/>
    <property type="match status" value="1"/>
</dbReference>
<dbReference type="PANTHER" id="PTHR11902">
    <property type="entry name" value="ENOLASE"/>
    <property type="match status" value="1"/>
</dbReference>
<dbReference type="PANTHER" id="PTHR11902:SF1">
    <property type="entry name" value="ENOLASE"/>
    <property type="match status" value="1"/>
</dbReference>
<dbReference type="Pfam" id="PF00113">
    <property type="entry name" value="Enolase_C"/>
    <property type="match status" value="1"/>
</dbReference>
<dbReference type="Pfam" id="PF03952">
    <property type="entry name" value="Enolase_N"/>
    <property type="match status" value="1"/>
</dbReference>
<dbReference type="PIRSF" id="PIRSF001400">
    <property type="entry name" value="Enolase"/>
    <property type="match status" value="1"/>
</dbReference>
<dbReference type="PRINTS" id="PR00148">
    <property type="entry name" value="ENOLASE"/>
</dbReference>
<dbReference type="SFLD" id="SFLDF00002">
    <property type="entry name" value="enolase"/>
    <property type="match status" value="1"/>
</dbReference>
<dbReference type="SFLD" id="SFLDG00178">
    <property type="entry name" value="enolase"/>
    <property type="match status" value="1"/>
</dbReference>
<dbReference type="SMART" id="SM01192">
    <property type="entry name" value="Enolase_C"/>
    <property type="match status" value="1"/>
</dbReference>
<dbReference type="SMART" id="SM01193">
    <property type="entry name" value="Enolase_N"/>
    <property type="match status" value="1"/>
</dbReference>
<dbReference type="SUPFAM" id="SSF51604">
    <property type="entry name" value="Enolase C-terminal domain-like"/>
    <property type="match status" value="1"/>
</dbReference>
<dbReference type="SUPFAM" id="SSF54826">
    <property type="entry name" value="Enolase N-terminal domain-like"/>
    <property type="match status" value="1"/>
</dbReference>
<dbReference type="PROSITE" id="PS00164">
    <property type="entry name" value="ENOLASE"/>
    <property type="match status" value="1"/>
</dbReference>
<organism>
    <name type="scientific">Fervidobacterium nodosum (strain ATCC 35602 / DSM 5306 / Rt17-B1)</name>
    <dbReference type="NCBI Taxonomy" id="381764"/>
    <lineage>
        <taxon>Bacteria</taxon>
        <taxon>Thermotogati</taxon>
        <taxon>Thermotogota</taxon>
        <taxon>Thermotogae</taxon>
        <taxon>Thermotogales</taxon>
        <taxon>Fervidobacteriaceae</taxon>
        <taxon>Fervidobacterium</taxon>
    </lineage>
</organism>
<comment type="function">
    <text evidence="1">Catalyzes the reversible conversion of 2-phosphoglycerate (2-PG) into phosphoenolpyruvate (PEP). It is essential for the degradation of carbohydrates via glycolysis.</text>
</comment>
<comment type="catalytic activity">
    <reaction evidence="1">
        <text>(2R)-2-phosphoglycerate = phosphoenolpyruvate + H2O</text>
        <dbReference type="Rhea" id="RHEA:10164"/>
        <dbReference type="ChEBI" id="CHEBI:15377"/>
        <dbReference type="ChEBI" id="CHEBI:58289"/>
        <dbReference type="ChEBI" id="CHEBI:58702"/>
        <dbReference type="EC" id="4.2.1.11"/>
    </reaction>
</comment>
<comment type="cofactor">
    <cofactor evidence="1">
        <name>Mg(2+)</name>
        <dbReference type="ChEBI" id="CHEBI:18420"/>
    </cofactor>
    <text evidence="1">Binds a second Mg(2+) ion via substrate during catalysis.</text>
</comment>
<comment type="pathway">
    <text evidence="1">Carbohydrate degradation; glycolysis; pyruvate from D-glyceraldehyde 3-phosphate: step 4/5.</text>
</comment>
<comment type="subcellular location">
    <subcellularLocation>
        <location evidence="1">Cytoplasm</location>
    </subcellularLocation>
    <subcellularLocation>
        <location evidence="1">Secreted</location>
    </subcellularLocation>
    <subcellularLocation>
        <location evidence="1">Cell surface</location>
    </subcellularLocation>
    <text evidence="1">Fractions of enolase are present in both the cytoplasm and on the cell surface.</text>
</comment>
<comment type="similarity">
    <text evidence="1">Belongs to the enolase family.</text>
</comment>
<proteinExistence type="inferred from homology"/>